<proteinExistence type="inferred from homology"/>
<keyword id="KW-0963">Cytoplasm</keyword>
<keyword id="KW-0350">Heme biosynthesis</keyword>
<keyword id="KW-0408">Iron</keyword>
<keyword id="KW-0456">Lyase</keyword>
<keyword id="KW-0479">Metal-binding</keyword>
<keyword id="KW-0627">Porphyrin biosynthesis</keyword>
<gene>
    <name evidence="1" type="primary">hemH</name>
    <name type="ordered locus">LPC_2918</name>
</gene>
<name>HEMH_LEGPC</name>
<dbReference type="EC" id="4.98.1.1" evidence="1"/>
<dbReference type="EMBL" id="CP000675">
    <property type="protein sequence ID" value="ABQ56819.1"/>
    <property type="molecule type" value="Genomic_DNA"/>
</dbReference>
<dbReference type="RefSeq" id="WP_011945602.1">
    <property type="nucleotide sequence ID" value="NC_009494.2"/>
</dbReference>
<dbReference type="SMR" id="A5IHG9"/>
<dbReference type="KEGG" id="lpc:LPC_2918"/>
<dbReference type="HOGENOM" id="CLU_018884_0_1_6"/>
<dbReference type="UniPathway" id="UPA00252">
    <property type="reaction ID" value="UER00325"/>
</dbReference>
<dbReference type="GO" id="GO:0005737">
    <property type="term" value="C:cytoplasm"/>
    <property type="evidence" value="ECO:0007669"/>
    <property type="project" value="UniProtKB-SubCell"/>
</dbReference>
<dbReference type="GO" id="GO:0004325">
    <property type="term" value="F:ferrochelatase activity"/>
    <property type="evidence" value="ECO:0007669"/>
    <property type="project" value="UniProtKB-UniRule"/>
</dbReference>
<dbReference type="GO" id="GO:0046872">
    <property type="term" value="F:metal ion binding"/>
    <property type="evidence" value="ECO:0007669"/>
    <property type="project" value="UniProtKB-KW"/>
</dbReference>
<dbReference type="GO" id="GO:0006783">
    <property type="term" value="P:heme biosynthetic process"/>
    <property type="evidence" value="ECO:0007669"/>
    <property type="project" value="UniProtKB-UniRule"/>
</dbReference>
<dbReference type="CDD" id="cd00419">
    <property type="entry name" value="Ferrochelatase_C"/>
    <property type="match status" value="1"/>
</dbReference>
<dbReference type="CDD" id="cd03411">
    <property type="entry name" value="Ferrochelatase_N"/>
    <property type="match status" value="1"/>
</dbReference>
<dbReference type="Gene3D" id="3.40.50.1400">
    <property type="match status" value="2"/>
</dbReference>
<dbReference type="HAMAP" id="MF_00323">
    <property type="entry name" value="Ferrochelatase"/>
    <property type="match status" value="1"/>
</dbReference>
<dbReference type="InterPro" id="IPR001015">
    <property type="entry name" value="Ferrochelatase"/>
</dbReference>
<dbReference type="InterPro" id="IPR033644">
    <property type="entry name" value="Ferrochelatase_C"/>
</dbReference>
<dbReference type="InterPro" id="IPR033659">
    <property type="entry name" value="Ferrochelatase_N"/>
</dbReference>
<dbReference type="NCBIfam" id="TIGR00109">
    <property type="entry name" value="hemH"/>
    <property type="match status" value="1"/>
</dbReference>
<dbReference type="PANTHER" id="PTHR11108">
    <property type="entry name" value="FERROCHELATASE"/>
    <property type="match status" value="1"/>
</dbReference>
<dbReference type="PANTHER" id="PTHR11108:SF1">
    <property type="entry name" value="FERROCHELATASE, MITOCHONDRIAL"/>
    <property type="match status" value="1"/>
</dbReference>
<dbReference type="Pfam" id="PF00762">
    <property type="entry name" value="Ferrochelatase"/>
    <property type="match status" value="1"/>
</dbReference>
<dbReference type="SUPFAM" id="SSF53800">
    <property type="entry name" value="Chelatase"/>
    <property type="match status" value="1"/>
</dbReference>
<sequence>MRRGLLLLNLGTPDNADIRAVKLYLREFLTDKRVIDLPTIPRYILVYCLILPFRSPKSAQAYQSIWTEKGSPLLYHSQNLVTKLQSALKDEYKIALGMRYGTPSITTALAELKDCHSLTILPLFPQYSSAATGSAIEKTLSYLANQEIIPSIKIIRDFYQRPEYIQAQAKIMKPYIKDNFHVLFSYHGIPERHIHKSGCDTLCPQTCTPIYDKNQACYRAQCYQTSLLLAKELQLGTHQYTTAFQSRLGKTPWIKPYTDEIFAELISKGIKNIVVSCPSFVADCLETLEEIGIRAKEQWEKLGGEQFILTPCMNDHPEWIKAIHSIVNEQI</sequence>
<reference key="1">
    <citation type="submission" date="2006-11" db="EMBL/GenBank/DDBJ databases">
        <title>Identification and characterization of a new conjugation/ type IVA secretion system (trb/tra) of L. pneumophila Corby localized on a mobile genomic island.</title>
        <authorList>
            <person name="Gloeckner G."/>
            <person name="Albert-Weissenberger C."/>
            <person name="Weinmann E."/>
            <person name="Jacobi S."/>
            <person name="Schunder E."/>
            <person name="Steinert M."/>
            <person name="Buchrieser C."/>
            <person name="Hacker J."/>
            <person name="Heuner K."/>
        </authorList>
    </citation>
    <scope>NUCLEOTIDE SEQUENCE [LARGE SCALE GENOMIC DNA]</scope>
    <source>
        <strain>Corby</strain>
    </source>
</reference>
<evidence type="ECO:0000255" key="1">
    <source>
        <dbReference type="HAMAP-Rule" id="MF_00323"/>
    </source>
</evidence>
<feature type="chain" id="PRO_1000019314" description="Ferrochelatase">
    <location>
        <begin position="1"/>
        <end position="331"/>
    </location>
</feature>
<feature type="binding site" evidence="1">
    <location>
        <position position="187"/>
    </location>
    <ligand>
        <name>Fe cation</name>
        <dbReference type="ChEBI" id="CHEBI:24875"/>
    </ligand>
</feature>
<feature type="binding site" evidence="1">
    <location>
        <position position="286"/>
    </location>
    <ligand>
        <name>Fe cation</name>
        <dbReference type="ChEBI" id="CHEBI:24875"/>
    </ligand>
</feature>
<organism>
    <name type="scientific">Legionella pneumophila (strain Corby)</name>
    <dbReference type="NCBI Taxonomy" id="400673"/>
    <lineage>
        <taxon>Bacteria</taxon>
        <taxon>Pseudomonadati</taxon>
        <taxon>Pseudomonadota</taxon>
        <taxon>Gammaproteobacteria</taxon>
        <taxon>Legionellales</taxon>
        <taxon>Legionellaceae</taxon>
        <taxon>Legionella</taxon>
    </lineage>
</organism>
<protein>
    <recommendedName>
        <fullName evidence="1">Ferrochelatase</fullName>
        <ecNumber evidence="1">4.98.1.1</ecNumber>
    </recommendedName>
    <alternativeName>
        <fullName evidence="1">Heme synthase</fullName>
    </alternativeName>
    <alternativeName>
        <fullName evidence="1">Protoheme ferro-lyase</fullName>
    </alternativeName>
</protein>
<accession>A5IHG9</accession>
<comment type="function">
    <text evidence="1">Catalyzes the ferrous insertion into protoporphyrin IX.</text>
</comment>
<comment type="catalytic activity">
    <reaction evidence="1">
        <text>heme b + 2 H(+) = protoporphyrin IX + Fe(2+)</text>
        <dbReference type="Rhea" id="RHEA:22584"/>
        <dbReference type="ChEBI" id="CHEBI:15378"/>
        <dbReference type="ChEBI" id="CHEBI:29033"/>
        <dbReference type="ChEBI" id="CHEBI:57306"/>
        <dbReference type="ChEBI" id="CHEBI:60344"/>
        <dbReference type="EC" id="4.98.1.1"/>
    </reaction>
</comment>
<comment type="pathway">
    <text evidence="1">Porphyrin-containing compound metabolism; protoheme biosynthesis; protoheme from protoporphyrin-IX: step 1/1.</text>
</comment>
<comment type="subcellular location">
    <subcellularLocation>
        <location evidence="1">Cytoplasm</location>
    </subcellularLocation>
</comment>
<comment type="similarity">
    <text evidence="1">Belongs to the ferrochelatase family.</text>
</comment>